<comment type="similarity">
    <text evidence="1">To Rhizobium NGR234A y4qD.</text>
</comment>
<feature type="chain" id="PRO_0000200946" description="Uncharacterized protein y4rO">
    <location>
        <begin position="1"/>
        <end position="618"/>
    </location>
</feature>
<dbReference type="EMBL" id="U00090">
    <property type="protein sequence ID" value="AAB91840.1"/>
    <property type="molecule type" value="Genomic_DNA"/>
</dbReference>
<dbReference type="RefSeq" id="NP_444053.1">
    <property type="nucleotide sequence ID" value="NC_000914.2"/>
</dbReference>
<dbReference type="RefSeq" id="WP_010875208.1">
    <property type="nucleotide sequence ID" value="NC_000914.2"/>
</dbReference>
<dbReference type="SMR" id="P55648"/>
<dbReference type="KEGG" id="rhi:NGR_a01720"/>
<dbReference type="PATRIC" id="fig|394.7.peg.167"/>
<dbReference type="eggNOG" id="COG0079">
    <property type="taxonomic scope" value="Bacteria"/>
</dbReference>
<dbReference type="HOGENOM" id="CLU_017584_3_2_5"/>
<dbReference type="OrthoDB" id="8357104at2"/>
<dbReference type="Proteomes" id="UP000001054">
    <property type="component" value="Plasmid pNGR234a"/>
</dbReference>
<dbReference type="GO" id="GO:0030170">
    <property type="term" value="F:pyridoxal phosphate binding"/>
    <property type="evidence" value="ECO:0007669"/>
    <property type="project" value="InterPro"/>
</dbReference>
<dbReference type="GO" id="GO:0009058">
    <property type="term" value="P:biosynthetic process"/>
    <property type="evidence" value="ECO:0007669"/>
    <property type="project" value="InterPro"/>
</dbReference>
<dbReference type="CDD" id="cd00609">
    <property type="entry name" value="AAT_like"/>
    <property type="match status" value="1"/>
</dbReference>
<dbReference type="Gene3D" id="3.90.1150.10">
    <property type="entry name" value="Aspartate Aminotransferase, domain 1"/>
    <property type="match status" value="1"/>
</dbReference>
<dbReference type="Gene3D" id="3.90.550.10">
    <property type="entry name" value="Spore Coat Polysaccharide Biosynthesis Protein SpsA, Chain A"/>
    <property type="match status" value="1"/>
</dbReference>
<dbReference type="Gene3D" id="3.40.640.10">
    <property type="entry name" value="Type I PLP-dependent aspartate aminotransferase-like (Major domain)"/>
    <property type="match status" value="1"/>
</dbReference>
<dbReference type="InterPro" id="IPR004839">
    <property type="entry name" value="Aminotransferase_I/II_large"/>
</dbReference>
<dbReference type="InterPro" id="IPR029044">
    <property type="entry name" value="Nucleotide-diphossugar_trans"/>
</dbReference>
<dbReference type="InterPro" id="IPR015424">
    <property type="entry name" value="PyrdxlP-dep_Trfase"/>
</dbReference>
<dbReference type="InterPro" id="IPR015421">
    <property type="entry name" value="PyrdxlP-dep_Trfase_major"/>
</dbReference>
<dbReference type="InterPro" id="IPR015422">
    <property type="entry name" value="PyrdxlP-dep_Trfase_small"/>
</dbReference>
<dbReference type="PANTHER" id="PTHR42885">
    <property type="entry name" value="HISTIDINOL-PHOSPHATE AMINOTRANSFERASE-RELATED"/>
    <property type="match status" value="1"/>
</dbReference>
<dbReference type="Pfam" id="PF00155">
    <property type="entry name" value="Aminotran_1_2"/>
    <property type="match status" value="1"/>
</dbReference>
<dbReference type="SUPFAM" id="SSF53448">
    <property type="entry name" value="Nucleotide-diphospho-sugar transferases"/>
    <property type="match status" value="1"/>
</dbReference>
<dbReference type="SUPFAM" id="SSF53383">
    <property type="entry name" value="PLP-dependent transferases"/>
    <property type="match status" value="1"/>
</dbReference>
<gene>
    <name type="ordered locus">NGR_a01720</name>
    <name type="ORF">y4rO</name>
</gene>
<organism>
    <name type="scientific">Sinorhizobium fredii (strain NBRC 101917 / NGR234)</name>
    <dbReference type="NCBI Taxonomy" id="394"/>
    <lineage>
        <taxon>Bacteria</taxon>
        <taxon>Pseudomonadati</taxon>
        <taxon>Pseudomonadota</taxon>
        <taxon>Alphaproteobacteria</taxon>
        <taxon>Hyphomicrobiales</taxon>
        <taxon>Rhizobiaceae</taxon>
        <taxon>Sinorhizobium/Ensifer group</taxon>
        <taxon>Sinorhizobium</taxon>
    </lineage>
</organism>
<keyword id="KW-0614">Plasmid</keyword>
<keyword id="KW-1185">Reference proteome</keyword>
<evidence type="ECO:0000305" key="1"/>
<sequence length="618" mass="69343">MPNVQSLAIIVTDPRLIISTWKDRCPAPLSSVGGMPILARLVSQLAQAGVQKTIVFALDGIGDVKRILNNRMKRMELVIRIMPTPGSGRLIDLATITEIAEFHGQVLVFTENAVIDPSLIQRLLRSSDRNITVVSRSERRRCLRLLGDIGGRLTAMLPGDSPIRESASADVSPVGIYKFDPALLRAIARIRPHRFNDDLEFFETALGLQRHQIYLMYADPQHVRRVNDATDLEAANFASSSSGDQFSILERLQAGNWRYPASEHILLCNHHFPPASVVDRLRERLQDLLYLQPSDQLDIIAKLSEMTDLPARNLAVGNGVGELIKALYGYLDPRIVIPTPTSAQYIDAVEPNKVSRFELPPENFDLDVEAFANFAKRRQASVAVLVNPNNPTGRLVPVQEIEWLASQLAIEKCRLVVDETFIEFSVAGKGNSVEKLLSVFPKMVILKSLGAIMGLGGAQIGYLASKDEQLTHGVRRRLPLGNINGIAEYLLWILPEFREEWEASFRRTRADVVSFSRMLDTIPELEVHPSQANYLFCRTPEAWPSAKHVATMLAKRYGVLVQNCENQCMKYGDRYLRLTVLPYEENRYLVSALRRINEELVEWSTQSKRAGTAYHLGC</sequence>
<accession>P55648</accession>
<proteinExistence type="predicted"/>
<geneLocation type="plasmid">
    <name>sym pNGR234a</name>
</geneLocation>
<name>Y4RO_SINFN</name>
<reference key="1">
    <citation type="journal article" date="1997" name="Nature">
        <title>Molecular basis of symbiosis between Rhizobium and legumes.</title>
        <authorList>
            <person name="Freiberg C.A."/>
            <person name="Fellay R."/>
            <person name="Bairoch A."/>
            <person name="Broughton W.J."/>
            <person name="Rosenthal A."/>
            <person name="Perret X."/>
        </authorList>
    </citation>
    <scope>NUCLEOTIDE SEQUENCE [LARGE SCALE GENOMIC DNA]</scope>
    <source>
        <strain>NBRC 101917 / NGR234</strain>
    </source>
</reference>
<reference key="2">
    <citation type="journal article" date="2009" name="Appl. Environ. Microbiol.">
        <title>Rhizobium sp. strain NGR234 possesses a remarkable number of secretion systems.</title>
        <authorList>
            <person name="Schmeisser C."/>
            <person name="Liesegang H."/>
            <person name="Krysciak D."/>
            <person name="Bakkou N."/>
            <person name="Le Quere A."/>
            <person name="Wollherr A."/>
            <person name="Heinemeyer I."/>
            <person name="Morgenstern B."/>
            <person name="Pommerening-Roeser A."/>
            <person name="Flores M."/>
            <person name="Palacios R."/>
            <person name="Brenner S."/>
            <person name="Gottschalk G."/>
            <person name="Schmitz R.A."/>
            <person name="Broughton W.J."/>
            <person name="Perret X."/>
            <person name="Strittmatter A.W."/>
            <person name="Streit W.R."/>
        </authorList>
    </citation>
    <scope>NUCLEOTIDE SEQUENCE [LARGE SCALE GENOMIC DNA]</scope>
    <source>
        <strain>NBRC 101917 / NGR234</strain>
    </source>
</reference>
<protein>
    <recommendedName>
        <fullName>Uncharacterized protein y4rO</fullName>
    </recommendedName>
</protein>